<dbReference type="EC" id="1.10.3.9" evidence="1"/>
<dbReference type="EMBL" id="AJ316582">
    <property type="protein sequence ID" value="CAC88024.1"/>
    <property type="molecule type" value="Genomic_DNA"/>
</dbReference>
<dbReference type="RefSeq" id="NP_783212.1">
    <property type="nucleotide sequence ID" value="NC_004561.1"/>
</dbReference>
<dbReference type="SMR" id="Q7FNT3"/>
<dbReference type="GeneID" id="806534"/>
<dbReference type="GO" id="GO:0009535">
    <property type="term" value="C:chloroplast thylakoid membrane"/>
    <property type="evidence" value="ECO:0007669"/>
    <property type="project" value="UniProtKB-SubCell"/>
</dbReference>
<dbReference type="GO" id="GO:0009523">
    <property type="term" value="C:photosystem II"/>
    <property type="evidence" value="ECO:0007669"/>
    <property type="project" value="UniProtKB-KW"/>
</dbReference>
<dbReference type="GO" id="GO:0016168">
    <property type="term" value="F:chlorophyll binding"/>
    <property type="evidence" value="ECO:0007669"/>
    <property type="project" value="UniProtKB-UniRule"/>
</dbReference>
<dbReference type="GO" id="GO:0045156">
    <property type="term" value="F:electron transporter, transferring electrons within the cyclic electron transport pathway of photosynthesis activity"/>
    <property type="evidence" value="ECO:0007669"/>
    <property type="project" value="InterPro"/>
</dbReference>
<dbReference type="GO" id="GO:0005506">
    <property type="term" value="F:iron ion binding"/>
    <property type="evidence" value="ECO:0007669"/>
    <property type="project" value="UniProtKB-UniRule"/>
</dbReference>
<dbReference type="GO" id="GO:0016682">
    <property type="term" value="F:oxidoreductase activity, acting on diphenols and related substances as donors, oxygen as acceptor"/>
    <property type="evidence" value="ECO:0007669"/>
    <property type="project" value="UniProtKB-UniRule"/>
</dbReference>
<dbReference type="GO" id="GO:0010242">
    <property type="term" value="F:oxygen evolving activity"/>
    <property type="evidence" value="ECO:0007669"/>
    <property type="project" value="UniProtKB-EC"/>
</dbReference>
<dbReference type="GO" id="GO:0009772">
    <property type="term" value="P:photosynthetic electron transport in photosystem II"/>
    <property type="evidence" value="ECO:0007669"/>
    <property type="project" value="InterPro"/>
</dbReference>
<dbReference type="GO" id="GO:0009635">
    <property type="term" value="P:response to herbicide"/>
    <property type="evidence" value="ECO:0007669"/>
    <property type="project" value="UniProtKB-KW"/>
</dbReference>
<dbReference type="CDD" id="cd09289">
    <property type="entry name" value="Photosystem-II_D1"/>
    <property type="match status" value="1"/>
</dbReference>
<dbReference type="FunFam" id="1.20.85.10:FF:000002">
    <property type="entry name" value="Photosystem II protein D1"/>
    <property type="match status" value="1"/>
</dbReference>
<dbReference type="Gene3D" id="1.20.85.10">
    <property type="entry name" value="Photosystem II protein D1-like"/>
    <property type="match status" value="1"/>
</dbReference>
<dbReference type="HAMAP" id="MF_01379">
    <property type="entry name" value="PSII_PsbA_D1"/>
    <property type="match status" value="1"/>
</dbReference>
<dbReference type="InterPro" id="IPR055266">
    <property type="entry name" value="D1/D2"/>
</dbReference>
<dbReference type="InterPro" id="IPR036854">
    <property type="entry name" value="Photo_II_D1/D2_sf"/>
</dbReference>
<dbReference type="InterPro" id="IPR000484">
    <property type="entry name" value="Photo_RC_L/M"/>
</dbReference>
<dbReference type="InterPro" id="IPR055265">
    <property type="entry name" value="Photo_RC_L/M_CS"/>
</dbReference>
<dbReference type="InterPro" id="IPR005867">
    <property type="entry name" value="PSII_D1"/>
</dbReference>
<dbReference type="NCBIfam" id="TIGR01151">
    <property type="entry name" value="psbA"/>
    <property type="match status" value="1"/>
</dbReference>
<dbReference type="PANTHER" id="PTHR33149:SF12">
    <property type="entry name" value="PHOTOSYSTEM II D2 PROTEIN"/>
    <property type="match status" value="1"/>
</dbReference>
<dbReference type="PANTHER" id="PTHR33149">
    <property type="entry name" value="PHOTOSYSTEM II PROTEIN D1"/>
    <property type="match status" value="1"/>
</dbReference>
<dbReference type="Pfam" id="PF00124">
    <property type="entry name" value="Photo_RC"/>
    <property type="match status" value="1"/>
</dbReference>
<dbReference type="PRINTS" id="PR00256">
    <property type="entry name" value="REACTNCENTRE"/>
</dbReference>
<dbReference type="SUPFAM" id="SSF81483">
    <property type="entry name" value="Bacterial photosystem II reaction centre, L and M subunits"/>
    <property type="match status" value="1"/>
</dbReference>
<dbReference type="PROSITE" id="PS00244">
    <property type="entry name" value="REACTION_CENTER"/>
    <property type="match status" value="1"/>
</dbReference>
<name>PSBA_ATRBE</name>
<sequence>MTAILERRESESLWGRFCNWITSTENRLYIGWFGVLMIPTLLTATSVFIIAFIAAPPVDIDGIREPVSGSLLYGNNIISGAIIPTSAAIGLHFYPIWEAASVDEWLYNGGPYELIVLHFLLGVACYMGREWELSFRLGMRPWIAVAYSAPVAAATAVFLIYPIGQGSFSDGMPLGISGTFNFMIVFQAEHNILMHPFHMLGVAGVFGGSLFSAMHGSLVTSSLIRETTENESANEGYRFGQEEETYNIVAAHGYFGRLIFQYASFNNSRSLHFFLAAWPVVGIWFTALGISTMAFNLNGFNFNQSVVDSQGRVINTWADIINRANLGMEVMHERNAHNFPLDLAAIEAPSTNG</sequence>
<protein>
    <recommendedName>
        <fullName evidence="1">Photosystem II protein D1</fullName>
        <shortName evidence="1">PSII D1 protein</shortName>
        <ecNumber evidence="1">1.10.3.9</ecNumber>
    </recommendedName>
    <alternativeName>
        <fullName evidence="1">Photosystem II Q(B) protein</fullName>
    </alternativeName>
</protein>
<geneLocation type="chloroplast"/>
<accession>Q7FNT3</accession>
<comment type="function">
    <text evidence="1">Photosystem II (PSII) is a light-driven water:plastoquinone oxidoreductase that uses light energy to abstract electrons from H(2)O, generating O(2) and a proton gradient subsequently used for ATP formation. It consists of a core antenna complex that captures photons, and an electron transfer chain that converts photonic excitation into a charge separation. The D1/D2 (PsbA/PsbD) reaction center heterodimer binds P680, the primary electron donor of PSII as well as several subsequent electron acceptors.</text>
</comment>
<comment type="catalytic activity">
    <reaction evidence="1">
        <text>2 a plastoquinone + 4 hnu + 2 H2O = 2 a plastoquinol + O2</text>
        <dbReference type="Rhea" id="RHEA:36359"/>
        <dbReference type="Rhea" id="RHEA-COMP:9561"/>
        <dbReference type="Rhea" id="RHEA-COMP:9562"/>
        <dbReference type="ChEBI" id="CHEBI:15377"/>
        <dbReference type="ChEBI" id="CHEBI:15379"/>
        <dbReference type="ChEBI" id="CHEBI:17757"/>
        <dbReference type="ChEBI" id="CHEBI:30212"/>
        <dbReference type="ChEBI" id="CHEBI:62192"/>
        <dbReference type="EC" id="1.10.3.9"/>
    </reaction>
</comment>
<comment type="cofactor">
    <text evidence="1">The D1/D2 heterodimer binds P680, chlorophylls that are the primary electron donor of PSII, and subsequent electron acceptors. It shares a non-heme iron and each subunit binds pheophytin, quinone, additional chlorophylls, carotenoids and lipids. D1 provides most of the ligands for the Mn4-Ca-O5 cluster of the oxygen-evolving complex (OEC). There is also a Cl(-1) ion associated with D1 and D2, which is required for oxygen evolution. The PSII complex binds additional chlorophylls, carotenoids and specific lipids.</text>
</comment>
<comment type="subunit">
    <text evidence="1">PSII is composed of 1 copy each of membrane proteins PsbA, PsbB, PsbC, PsbD, PsbE, PsbF, PsbH, PsbI, PsbJ, PsbK, PsbL, PsbM, PsbT, PsbX, PsbY, PsbZ, Psb30/Ycf12, at least 3 peripheral proteins of the oxygen-evolving complex and a large number of cofactors. It forms dimeric complexes.</text>
</comment>
<comment type="subcellular location">
    <subcellularLocation>
        <location evidence="1">Plastid</location>
        <location evidence="1">Chloroplast thylakoid membrane</location>
        <topology evidence="1">Multi-pass membrane protein</topology>
    </subcellularLocation>
</comment>
<comment type="PTM">
    <text evidence="1">Tyr-161 forms a radical intermediate that is referred to as redox-active TyrZ, YZ or Y-Z.</text>
</comment>
<comment type="PTM">
    <text evidence="1">C-terminally processed by CTPA; processing is essential to allow assembly of the oxygen-evolving complex and thus photosynthetic growth.</text>
</comment>
<comment type="miscellaneous">
    <text evidence="1">2 of the reaction center chlorophylls (ChlD1 and ChlD2) are entirely coordinated by water.</text>
</comment>
<comment type="miscellaneous">
    <text evidence="1">Herbicides such as atrazine, BNT, diuron or ioxynil bind in the Q(B) binding site and block subsequent electron transfer.</text>
</comment>
<comment type="similarity">
    <text evidence="1">Belongs to the reaction center PufL/M/PsbA/D family.</text>
</comment>
<organism>
    <name type="scientific">Atropa belladonna</name>
    <name type="common">Belladonna</name>
    <name type="synonym">Deadly nightshade</name>
    <dbReference type="NCBI Taxonomy" id="33113"/>
    <lineage>
        <taxon>Eukaryota</taxon>
        <taxon>Viridiplantae</taxon>
        <taxon>Streptophyta</taxon>
        <taxon>Embryophyta</taxon>
        <taxon>Tracheophyta</taxon>
        <taxon>Spermatophyta</taxon>
        <taxon>Magnoliopsida</taxon>
        <taxon>eudicotyledons</taxon>
        <taxon>Gunneridae</taxon>
        <taxon>Pentapetalae</taxon>
        <taxon>asterids</taxon>
        <taxon>lamiids</taxon>
        <taxon>Solanales</taxon>
        <taxon>Solanaceae</taxon>
        <taxon>Solanoideae</taxon>
        <taxon>Hyoscyameae</taxon>
        <taxon>Atropa</taxon>
    </lineage>
</organism>
<gene>
    <name evidence="1" type="primary">psbA</name>
</gene>
<evidence type="ECO:0000255" key="1">
    <source>
        <dbReference type="HAMAP-Rule" id="MF_01379"/>
    </source>
</evidence>
<proteinExistence type="inferred from homology"/>
<reference key="1">
    <citation type="journal article" date="2002" name="Mol. Biol. Evol.">
        <title>The plastid chromosome of Atropa belladonna and its comparison with that of Nicotiana tabacum: the role of RNA editing in generating divergence in the process of plant speciation.</title>
        <authorList>
            <person name="Schmitz-Linneweber C."/>
            <person name="Regel R."/>
            <person name="Du T.G."/>
            <person name="Hupfer H."/>
            <person name="Herrmann R.G."/>
            <person name="Maier R.M."/>
        </authorList>
    </citation>
    <scope>NUCLEOTIDE SEQUENCE [LARGE SCALE GENOMIC DNA]</scope>
    <source>
        <strain>cv. Ab5p(kan)</strain>
    </source>
</reference>
<keyword id="KW-0007">Acetylation</keyword>
<keyword id="KW-0106">Calcium</keyword>
<keyword id="KW-0148">Chlorophyll</keyword>
<keyword id="KW-0150">Chloroplast</keyword>
<keyword id="KW-0157">Chromophore</keyword>
<keyword id="KW-0249">Electron transport</keyword>
<keyword id="KW-0359">Herbicide resistance</keyword>
<keyword id="KW-0408">Iron</keyword>
<keyword id="KW-0460">Magnesium</keyword>
<keyword id="KW-0464">Manganese</keyword>
<keyword id="KW-0472">Membrane</keyword>
<keyword id="KW-0479">Metal-binding</keyword>
<keyword id="KW-0560">Oxidoreductase</keyword>
<keyword id="KW-0597">Phosphoprotein</keyword>
<keyword id="KW-0602">Photosynthesis</keyword>
<keyword id="KW-0604">Photosystem II</keyword>
<keyword id="KW-0934">Plastid</keyword>
<keyword id="KW-0793">Thylakoid</keyword>
<keyword id="KW-0812">Transmembrane</keyword>
<keyword id="KW-1133">Transmembrane helix</keyword>
<keyword id="KW-0813">Transport</keyword>
<feature type="initiator methionine" description="Removed" evidence="1">
    <location>
        <position position="1"/>
    </location>
</feature>
<feature type="chain" id="PRO_0000339950" description="Photosystem II protein D1" evidence="1">
    <location>
        <begin position="2"/>
        <end position="344"/>
    </location>
</feature>
<feature type="propeptide" id="PRO_0000339951" evidence="1">
    <location>
        <begin position="345"/>
        <end position="353"/>
    </location>
</feature>
<feature type="transmembrane region" description="Helical" evidence="1">
    <location>
        <begin position="29"/>
        <end position="46"/>
    </location>
</feature>
<feature type="transmembrane region" description="Helical" evidence="1">
    <location>
        <begin position="118"/>
        <end position="133"/>
    </location>
</feature>
<feature type="transmembrane region" description="Helical" evidence="1">
    <location>
        <begin position="142"/>
        <end position="156"/>
    </location>
</feature>
<feature type="transmembrane region" description="Helical" evidence="1">
    <location>
        <begin position="197"/>
        <end position="218"/>
    </location>
</feature>
<feature type="transmembrane region" description="Helical" evidence="1">
    <location>
        <begin position="274"/>
        <end position="288"/>
    </location>
</feature>
<feature type="binding site" description="axial binding residue" evidence="1">
    <location>
        <position position="118"/>
    </location>
    <ligand>
        <name>chlorophyll a</name>
        <dbReference type="ChEBI" id="CHEBI:58416"/>
        <label>ChlzD1</label>
    </ligand>
    <ligandPart>
        <name>Mg</name>
        <dbReference type="ChEBI" id="CHEBI:25107"/>
    </ligandPart>
</feature>
<feature type="binding site" evidence="1">
    <location>
        <position position="126"/>
    </location>
    <ligand>
        <name>pheophytin a</name>
        <dbReference type="ChEBI" id="CHEBI:136840"/>
        <label>D1</label>
    </ligand>
</feature>
<feature type="binding site" evidence="1">
    <location>
        <position position="170"/>
    </location>
    <ligand>
        <name>[CaMn4O5] cluster</name>
        <dbReference type="ChEBI" id="CHEBI:189552"/>
    </ligand>
</feature>
<feature type="binding site" evidence="1">
    <location>
        <position position="189"/>
    </location>
    <ligand>
        <name>[CaMn4O5] cluster</name>
        <dbReference type="ChEBI" id="CHEBI:189552"/>
    </ligand>
</feature>
<feature type="binding site" description="axial binding residue" evidence="1">
    <location>
        <position position="198"/>
    </location>
    <ligand>
        <name>chlorophyll a</name>
        <dbReference type="ChEBI" id="CHEBI:58416"/>
        <label>PD1</label>
    </ligand>
    <ligandPart>
        <name>Mg</name>
        <dbReference type="ChEBI" id="CHEBI:25107"/>
    </ligandPart>
</feature>
<feature type="binding site" evidence="1">
    <location>
        <position position="215"/>
    </location>
    <ligand>
        <name>a quinone</name>
        <dbReference type="ChEBI" id="CHEBI:132124"/>
        <label>B</label>
    </ligand>
</feature>
<feature type="binding site" evidence="1">
    <location>
        <position position="215"/>
    </location>
    <ligand>
        <name>Fe cation</name>
        <dbReference type="ChEBI" id="CHEBI:24875"/>
        <note>ligand shared with heterodimeric partner</note>
    </ligand>
</feature>
<feature type="binding site" evidence="1">
    <location>
        <begin position="264"/>
        <end position="265"/>
    </location>
    <ligand>
        <name>a quinone</name>
        <dbReference type="ChEBI" id="CHEBI:132124"/>
        <label>B</label>
    </ligand>
</feature>
<feature type="binding site" evidence="1">
    <location>
        <position position="272"/>
    </location>
    <ligand>
        <name>Fe cation</name>
        <dbReference type="ChEBI" id="CHEBI:24875"/>
        <note>ligand shared with heterodimeric partner</note>
    </ligand>
</feature>
<feature type="binding site" evidence="1">
    <location>
        <position position="332"/>
    </location>
    <ligand>
        <name>[CaMn4O5] cluster</name>
        <dbReference type="ChEBI" id="CHEBI:189552"/>
    </ligand>
</feature>
<feature type="binding site" evidence="1">
    <location>
        <position position="333"/>
    </location>
    <ligand>
        <name>[CaMn4O5] cluster</name>
        <dbReference type="ChEBI" id="CHEBI:189552"/>
    </ligand>
</feature>
<feature type="binding site" evidence="1">
    <location>
        <position position="342"/>
    </location>
    <ligand>
        <name>[CaMn4O5] cluster</name>
        <dbReference type="ChEBI" id="CHEBI:189552"/>
    </ligand>
</feature>
<feature type="binding site" evidence="1">
    <location>
        <position position="344"/>
    </location>
    <ligand>
        <name>[CaMn4O5] cluster</name>
        <dbReference type="ChEBI" id="CHEBI:189552"/>
    </ligand>
</feature>
<feature type="site" description="Tyrosine radical intermediate" evidence="1">
    <location>
        <position position="161"/>
    </location>
</feature>
<feature type="site" description="Stabilizes free radical intermediate" evidence="1">
    <location>
        <position position="190"/>
    </location>
</feature>
<feature type="site" description="Cleavage; by CTPA" evidence="1">
    <location>
        <begin position="344"/>
        <end position="345"/>
    </location>
</feature>
<feature type="modified residue" description="N-acetylthreonine" evidence="1">
    <location>
        <position position="2"/>
    </location>
</feature>
<feature type="modified residue" description="Phosphothreonine" evidence="1">
    <location>
        <position position="2"/>
    </location>
</feature>